<accession>Q52N47</accession>
<comment type="function">
    <text evidence="1">Plays a regulatory role in the processing of the amyloid-beta A4 precursor protein (APP) and acts as an inhibitor of the amyloid-beta peptide aggregation and fibrils deposition. Plays a role in the induction of neurite outgrowth. Functions as a protease inhibitor by blocking access of secretases to APP cleavage sites (By similarity).</text>
</comment>
<comment type="function">
    <text evidence="1">Mature BRI2 (mBRI2) functions as a modulator of the amyloid-beta A4 precursor protein (APP) processing leading to a strong reduction in the secretion of secretase-processed amyloid-beta protein 40 and amyloid-beta protein 42.</text>
</comment>
<comment type="function">
    <text evidence="1">Bri23 peptide prevents aggregation of APP amyloid-beta protein 42 into toxic oligomers.</text>
</comment>
<comment type="subunit">
    <text evidence="1 2">Homodimer; disulfide-linked. Interacts with SPPL2A and SPPL2B. Interacts with APP. Mature BRI2 (mBRI2) interacts with the APP amyloid-beta A4 protein; the interaction occurs at the cell surface and in the endocytic compartments and enable alpha- and beta-secretase-induced APP cleavage inhibition. Mature BRI2 (mBRI2) interacts with the APP C99; the interaction occurs in the endocytic compartments and enable gamma-secretase-induced C99 cleavage inhibition. May form heterodimers with Bri23 peptide and APP amyloid-beta protein 40 (By similarity). Interacts with ADAM7 in sperm; the interaction increases following capacitation (By similarity).</text>
</comment>
<comment type="subcellular location">
    <molecule>Integral membrane protein 2B</molecule>
    <subcellularLocation>
        <location evidence="3">Golgi apparatus membrane</location>
        <topology evidence="3">Single-pass type II membrane protein</topology>
    </subcellularLocation>
    <text evidence="3">Immature BRI2 (imBRI2) is cleaved by furin in the Golgi into mBRI2 and a Bri23 peptide. mBRI2 is transported to the plasma membrane and Bri23 peptide is secreted.</text>
</comment>
<comment type="subcellular location">
    <molecule>BRI2, membrane form</molecule>
    <subcellularLocation>
        <location evidence="3">Cell membrane</location>
        <topology evidence="3">Single-pass type II membrane protein</topology>
    </subcellularLocation>
    <subcellularLocation>
        <location evidence="3">Endosome membrane</location>
        <topology evidence="3">Single-pass type II membrane protein</topology>
    </subcellularLocation>
    <text evidence="3">Mature BRI2 (mBRI2) needs to be transported from the endoplasmic reticulum compartment to the cell membrane in order to be able to inhibit APP processing.</text>
</comment>
<comment type="subcellular location">
    <molecule>Bri23 peptide</molecule>
    <subcellularLocation>
        <location evidence="3">Secreted</location>
    </subcellularLocation>
    <text evidence="3">Detected in the cerebral spinal fluid (CSF).</text>
</comment>
<comment type="subcellular location">
    <molecule>BRI2C, soluble form</molecule>
    <subcellularLocation>
        <location evidence="3">Secreted</location>
    </subcellularLocation>
</comment>
<comment type="PTM">
    <text evidence="1">The ectodomain C-terminal part of the imBRI2 is processed by furin producing a secreted Bri23 peptide and a mature BRI2, membrane form (mBRI2). The remaining part of the ectodomain of mBRI2 containing the BRICHOS domain is cleaved by ADAM10 and is secreted (BRI2C, soluble form). The membrane-bound N-terminal fragment (BRI2C, membrane form) is further proteolytically processed by SPPL2A and SPPL2B through regulated intramembrane proteolysis producing a secreted C-peptide and a BRI2 intracellular domain (BRI2 ICD) released in the cytosol. Shedding by ADAM10 facilitates intramembrane cleavage but is not absolutely required for BRI2 ICD generation (By similarity).</text>
</comment>
<comment type="PTM">
    <text evidence="1">Glycosylation at Asn-170 is important for cell surface localization, but doesn't affect furin- and ADAM10-induced proteolytic processing.</text>
</comment>
<comment type="similarity">
    <text evidence="6">Belongs to the ITM2 family.</text>
</comment>
<feature type="chain" id="PRO_0000295292" description="Integral membrane protein 2B">
    <location>
        <begin position="1"/>
        <end position="266"/>
    </location>
</feature>
<feature type="chain" id="PRO_0000417479" description="BRI2, membrane form" evidence="1">
    <location>
        <begin position="1"/>
        <end position="243"/>
    </location>
</feature>
<feature type="chain" id="PRO_0000417480" description="BRI2 intracellular domain" evidence="1">
    <location>
        <begin position="1"/>
        <end status="unknown"/>
    </location>
</feature>
<feature type="chain" id="PRO_0000417481" description="BRI2C, soluble form" evidence="1">
    <location>
        <begin status="unknown"/>
        <end position="243"/>
    </location>
</feature>
<feature type="peptide" id="PRO_0000417482" description="Bri23 peptide" evidence="1">
    <location>
        <begin position="244"/>
        <end position="266"/>
    </location>
</feature>
<feature type="topological domain" description="Cytoplasmic" evidence="4">
    <location>
        <begin position="1"/>
        <end position="54"/>
    </location>
</feature>
<feature type="transmembrane region" description="Helical; Signal-anchor for type II membrane protein" evidence="4">
    <location>
        <begin position="55"/>
        <end position="75"/>
    </location>
</feature>
<feature type="topological domain" description="Lumenal" evidence="4">
    <location>
        <begin position="76"/>
        <end position="266"/>
    </location>
</feature>
<feature type="domain" description="BRICHOS" evidence="5">
    <location>
        <begin position="137"/>
        <end position="231"/>
    </location>
</feature>
<feature type="region of interest" description="Necessary for interaction with APP and inhibitor effects on APP processing" evidence="1">
    <location>
        <begin position="102"/>
        <end position="134"/>
    </location>
</feature>
<feature type="site" description="Cleavage; by furin" evidence="1">
    <location>
        <begin position="243"/>
        <end position="244"/>
    </location>
</feature>
<feature type="glycosylation site" description="N-linked (GlcNAc...) asparagine" evidence="4">
    <location>
        <position position="170"/>
    </location>
</feature>
<feature type="disulfide bond" description="Interchain" evidence="1">
    <location>
        <position position="89"/>
    </location>
</feature>
<feature type="disulfide bond" evidence="1">
    <location>
        <begin position="164"/>
        <end position="223"/>
    </location>
</feature>
<feature type="disulfide bond" evidence="1">
    <location>
        <begin position="248"/>
        <end position="265"/>
    </location>
</feature>
<proteinExistence type="evidence at transcript level"/>
<organism>
    <name type="scientific">Sus scrofa</name>
    <name type="common">Pig</name>
    <dbReference type="NCBI Taxonomy" id="9823"/>
    <lineage>
        <taxon>Eukaryota</taxon>
        <taxon>Metazoa</taxon>
        <taxon>Chordata</taxon>
        <taxon>Craniata</taxon>
        <taxon>Vertebrata</taxon>
        <taxon>Euteleostomi</taxon>
        <taxon>Mammalia</taxon>
        <taxon>Eutheria</taxon>
        <taxon>Laurasiatheria</taxon>
        <taxon>Artiodactyla</taxon>
        <taxon>Suina</taxon>
        <taxon>Suidae</taxon>
        <taxon>Sus</taxon>
    </lineage>
</organism>
<dbReference type="EMBL" id="AY997700">
    <property type="protein sequence ID" value="AAY00165.1"/>
    <property type="molecule type" value="mRNA"/>
</dbReference>
<dbReference type="RefSeq" id="NP_001035834.1">
    <property type="nucleotide sequence ID" value="NM_001042375.1"/>
</dbReference>
<dbReference type="FunCoup" id="Q52N47">
    <property type="interactions" value="895"/>
</dbReference>
<dbReference type="STRING" id="9823.ENSSSCP00000010034"/>
<dbReference type="GlyCosmos" id="Q52N47">
    <property type="glycosylation" value="1 site, No reported glycans"/>
</dbReference>
<dbReference type="GlyGen" id="Q52N47">
    <property type="glycosylation" value="1 site"/>
</dbReference>
<dbReference type="PaxDb" id="9823-ENSSSCP00000010034"/>
<dbReference type="PeptideAtlas" id="Q52N47"/>
<dbReference type="GeneID" id="595120"/>
<dbReference type="KEGG" id="ssc:595120"/>
<dbReference type="CTD" id="9445"/>
<dbReference type="eggNOG" id="KOG4681">
    <property type="taxonomic scope" value="Eukaryota"/>
</dbReference>
<dbReference type="InParanoid" id="Q52N47"/>
<dbReference type="OrthoDB" id="9982095at2759"/>
<dbReference type="Proteomes" id="UP000008227">
    <property type="component" value="Unplaced"/>
</dbReference>
<dbReference type="Proteomes" id="UP000314985">
    <property type="component" value="Unplaced"/>
</dbReference>
<dbReference type="Proteomes" id="UP000694570">
    <property type="component" value="Unplaced"/>
</dbReference>
<dbReference type="Proteomes" id="UP000694571">
    <property type="component" value="Unplaced"/>
</dbReference>
<dbReference type="Proteomes" id="UP000694720">
    <property type="component" value="Unplaced"/>
</dbReference>
<dbReference type="Proteomes" id="UP000694722">
    <property type="component" value="Unplaced"/>
</dbReference>
<dbReference type="Proteomes" id="UP000694723">
    <property type="component" value="Unplaced"/>
</dbReference>
<dbReference type="Proteomes" id="UP000694724">
    <property type="component" value="Unplaced"/>
</dbReference>
<dbReference type="Proteomes" id="UP000694725">
    <property type="component" value="Unplaced"/>
</dbReference>
<dbReference type="Proteomes" id="UP000694726">
    <property type="component" value="Unplaced"/>
</dbReference>
<dbReference type="Proteomes" id="UP000694727">
    <property type="component" value="Unplaced"/>
</dbReference>
<dbReference type="Proteomes" id="UP000694728">
    <property type="component" value="Unplaced"/>
</dbReference>
<dbReference type="GO" id="GO:0010008">
    <property type="term" value="C:endosome membrane"/>
    <property type="evidence" value="ECO:0007669"/>
    <property type="project" value="UniProtKB-SubCell"/>
</dbReference>
<dbReference type="GO" id="GO:0005615">
    <property type="term" value="C:extracellular space"/>
    <property type="evidence" value="ECO:0000250"/>
    <property type="project" value="UniProtKB"/>
</dbReference>
<dbReference type="GO" id="GO:0005794">
    <property type="term" value="C:Golgi apparatus"/>
    <property type="evidence" value="ECO:0000318"/>
    <property type="project" value="GO_Central"/>
</dbReference>
<dbReference type="GO" id="GO:0000139">
    <property type="term" value="C:Golgi membrane"/>
    <property type="evidence" value="ECO:0007669"/>
    <property type="project" value="UniProtKB-SubCell"/>
</dbReference>
<dbReference type="GO" id="GO:0030660">
    <property type="term" value="C:Golgi-associated vesicle membrane"/>
    <property type="evidence" value="ECO:0000250"/>
    <property type="project" value="UniProtKB"/>
</dbReference>
<dbReference type="GO" id="GO:0031090">
    <property type="term" value="C:organelle membrane"/>
    <property type="evidence" value="ECO:0000250"/>
    <property type="project" value="UniProtKB"/>
</dbReference>
<dbReference type="GO" id="GO:0005886">
    <property type="term" value="C:plasma membrane"/>
    <property type="evidence" value="ECO:0000250"/>
    <property type="project" value="UniProtKB"/>
</dbReference>
<dbReference type="GO" id="GO:0001540">
    <property type="term" value="F:amyloid-beta binding"/>
    <property type="evidence" value="ECO:0000318"/>
    <property type="project" value="GO_Central"/>
</dbReference>
<dbReference type="GO" id="GO:0042985">
    <property type="term" value="P:negative regulation of amyloid precursor protein biosynthetic process"/>
    <property type="evidence" value="ECO:0000250"/>
    <property type="project" value="UniProtKB"/>
</dbReference>
<dbReference type="InterPro" id="IPR007084">
    <property type="entry name" value="BRICHOS_dom"/>
</dbReference>
<dbReference type="InterPro" id="IPR040145">
    <property type="entry name" value="ITM2"/>
</dbReference>
<dbReference type="PANTHER" id="PTHR10962:SF4">
    <property type="entry name" value="INTEGRAL MEMBRANE PROTEIN 2B"/>
    <property type="match status" value="1"/>
</dbReference>
<dbReference type="PANTHER" id="PTHR10962">
    <property type="entry name" value="INTEGRAL TRANSMEMBRANE PROTEIN 2"/>
    <property type="match status" value="1"/>
</dbReference>
<dbReference type="Pfam" id="PF04089">
    <property type="entry name" value="BRICHOS"/>
    <property type="match status" value="1"/>
</dbReference>
<dbReference type="SMART" id="SM01039">
    <property type="entry name" value="BRICHOS"/>
    <property type="match status" value="1"/>
</dbReference>
<dbReference type="PROSITE" id="PS50869">
    <property type="entry name" value="BRICHOS"/>
    <property type="match status" value="1"/>
</dbReference>
<sequence length="266" mass="30284">MVKVTFNSALAQKEAKKXEPKSGEEALIIPPDTXAVDCKDPDEVVPVGQRRAWCWCMCFGLAFMLAGVILGGAYLYKYFALQPDDVYYCGIKYIKDDVILNEPPANAPAARYQTIEENIKIFEEDGVEFISVPVPEFADSDPANIVHDFNKKLTAYLDLNLDKCYVIPLNTSIVMPPRNLLELLINIKAGTYLPQSYLIHEHMVITDRIENIDHLGFYIYRLCHDKETYKLQRKETVKGIQKREASNCATIRHFENKFAVETLICS</sequence>
<evidence type="ECO:0000250" key="1"/>
<evidence type="ECO:0000250" key="2">
    <source>
        <dbReference type="UniProtKB" id="O89051"/>
    </source>
</evidence>
<evidence type="ECO:0000250" key="3">
    <source>
        <dbReference type="UniProtKB" id="Q9Y287"/>
    </source>
</evidence>
<evidence type="ECO:0000255" key="4"/>
<evidence type="ECO:0000255" key="5">
    <source>
        <dbReference type="PROSITE-ProRule" id="PRU00255"/>
    </source>
</evidence>
<evidence type="ECO:0000305" key="6"/>
<protein>
    <recommendedName>
        <fullName>Integral membrane protein 2B</fullName>
    </recommendedName>
    <alternativeName>
        <fullName>Immature BRI2</fullName>
        <shortName>imBRI2</shortName>
    </alternativeName>
    <alternativeName>
        <fullName>Transmembrane protein BRI</fullName>
        <shortName>Bri</shortName>
    </alternativeName>
    <component>
        <recommendedName>
            <fullName>BRI2, membrane form</fullName>
        </recommendedName>
        <alternativeName>
            <fullName>Mature BRI2</fullName>
            <shortName>mBRI2</shortName>
        </alternativeName>
    </component>
    <component>
        <recommendedName>
            <fullName>BRI2 intracellular domain</fullName>
            <shortName>BRI2 ICD</shortName>
        </recommendedName>
    </component>
    <component>
        <recommendedName>
            <fullName>BRI2C, soluble form</fullName>
        </recommendedName>
    </component>
    <component>
        <recommendedName>
            <fullName>Bri23 peptide</fullName>
            <shortName>Bri2-23</shortName>
        </recommendedName>
        <alternativeName>
            <fullName>ABri23</fullName>
        </alternativeName>
        <alternativeName>
            <fullName>C-terminal peptide</fullName>
        </alternativeName>
        <alternativeName>
            <fullName>P23 peptide</fullName>
        </alternativeName>
    </component>
</protein>
<gene>
    <name type="primary">ITM2B</name>
</gene>
<keyword id="KW-1003">Cell membrane</keyword>
<keyword id="KW-1015">Disulfide bond</keyword>
<keyword id="KW-0967">Endosome</keyword>
<keyword id="KW-0325">Glycoprotein</keyword>
<keyword id="KW-0333">Golgi apparatus</keyword>
<keyword id="KW-0472">Membrane</keyword>
<keyword id="KW-1185">Reference proteome</keyword>
<keyword id="KW-0964">Secreted</keyword>
<keyword id="KW-0735">Signal-anchor</keyword>
<keyword id="KW-0812">Transmembrane</keyword>
<keyword id="KW-1133">Transmembrane helix</keyword>
<reference key="1">
    <citation type="submission" date="2005-04" db="EMBL/GenBank/DDBJ databases">
        <authorList>
            <person name="Liu G.Y."/>
            <person name="Xiong Z.Y."/>
        </authorList>
    </citation>
    <scope>NUCLEOTIDE SEQUENCE [LARGE SCALE MRNA]</scope>
</reference>
<name>ITM2B_PIG</name>